<name>PCP4_HUMAN</name>
<reference key="1">
    <citation type="journal article" date="1996" name="Hum. Genet.">
        <title>Cloning of the cDNA for a human homolog of the rat PEP-19 gene and mapping to chromosome 21q22.2-q22.3.</title>
        <authorList>
            <person name="Chen H.M."/>
            <person name="Bouras C."/>
            <person name="Antonarakis S.E."/>
        </authorList>
    </citation>
    <scope>NUCLEOTIDE SEQUENCE [MRNA]</scope>
    <source>
        <tissue>Retina</tissue>
    </source>
</reference>
<reference key="2">
    <citation type="journal article" date="1996" name="Somat. Cell Mol. Genet.">
        <title>Molecular genetic characterization and comparative mapping of the human PCP4 gene.</title>
        <authorList>
            <person name="Cabin D.E."/>
            <person name="Gardiner K."/>
            <person name="Reeves R.H."/>
        </authorList>
    </citation>
    <scope>NUCLEOTIDE SEQUENCE [GENOMIC DNA / MRNA]</scope>
</reference>
<reference key="3">
    <citation type="journal article" date="2011" name="J. Comp. Neurol.">
        <title>PCP4 (PEP19) overexpression induces premature neuronal differentiation associated with Ca(2+) /calmodulin-dependent kinase II-o activation in mouse models of Down syndrome.</title>
        <authorList>
            <person name="Mouton-Liger F."/>
            <person name="Thomas S."/>
            <person name="Rattenbach R."/>
            <person name="Magnol L."/>
            <person name="Larigaldie V."/>
            <person name="Ledru A."/>
            <person name="Herault Y."/>
            <person name="Verney C."/>
            <person name="Creau N."/>
        </authorList>
    </citation>
    <scope>NUCLEOTIDE SEQUENCE [MRNA]</scope>
    <scope>FUNCTION</scope>
    <source>
        <tissue>Fetal kidney</tissue>
    </source>
</reference>
<reference key="4">
    <citation type="submission" date="1998-05" db="EMBL/GenBank/DDBJ databases">
        <authorList>
            <person name="Taudien S."/>
            <person name="Nordsiek G."/>
            <person name="Korenberg J."/>
            <person name="Drescher B."/>
            <person name="Weber J."/>
            <person name="Schattevoy R."/>
            <person name="Rosenthal A."/>
        </authorList>
    </citation>
    <scope>NUCLEOTIDE SEQUENCE [GENOMIC DNA]</scope>
</reference>
<reference key="5">
    <citation type="submission" date="2001-09" db="EMBL/GenBank/DDBJ databases">
        <authorList>
            <person name="Kang L."/>
            <person name="Zhang B."/>
            <person name="Zhou Y."/>
            <person name="Peng X."/>
            <person name="Yuan J."/>
            <person name="Qiang B."/>
        </authorList>
    </citation>
    <scope>NUCLEOTIDE SEQUENCE [MRNA]</scope>
    <source>
        <tissue>Fetal brain</tissue>
    </source>
</reference>
<reference key="6">
    <citation type="journal article" date="2004" name="Nat. Genet.">
        <title>Complete sequencing and characterization of 21,243 full-length human cDNAs.</title>
        <authorList>
            <person name="Ota T."/>
            <person name="Suzuki Y."/>
            <person name="Nishikawa T."/>
            <person name="Otsuki T."/>
            <person name="Sugiyama T."/>
            <person name="Irie R."/>
            <person name="Wakamatsu A."/>
            <person name="Hayashi K."/>
            <person name="Sato H."/>
            <person name="Nagai K."/>
            <person name="Kimura K."/>
            <person name="Makita H."/>
            <person name="Sekine M."/>
            <person name="Obayashi M."/>
            <person name="Nishi T."/>
            <person name="Shibahara T."/>
            <person name="Tanaka T."/>
            <person name="Ishii S."/>
            <person name="Yamamoto J."/>
            <person name="Saito K."/>
            <person name="Kawai Y."/>
            <person name="Isono Y."/>
            <person name="Nakamura Y."/>
            <person name="Nagahari K."/>
            <person name="Murakami K."/>
            <person name="Yasuda T."/>
            <person name="Iwayanagi T."/>
            <person name="Wagatsuma M."/>
            <person name="Shiratori A."/>
            <person name="Sudo H."/>
            <person name="Hosoiri T."/>
            <person name="Kaku Y."/>
            <person name="Kodaira H."/>
            <person name="Kondo H."/>
            <person name="Sugawara M."/>
            <person name="Takahashi M."/>
            <person name="Kanda K."/>
            <person name="Yokoi T."/>
            <person name="Furuya T."/>
            <person name="Kikkawa E."/>
            <person name="Omura Y."/>
            <person name="Abe K."/>
            <person name="Kamihara K."/>
            <person name="Katsuta N."/>
            <person name="Sato K."/>
            <person name="Tanikawa M."/>
            <person name="Yamazaki M."/>
            <person name="Ninomiya K."/>
            <person name="Ishibashi T."/>
            <person name="Yamashita H."/>
            <person name="Murakawa K."/>
            <person name="Fujimori K."/>
            <person name="Tanai H."/>
            <person name="Kimata M."/>
            <person name="Watanabe M."/>
            <person name="Hiraoka S."/>
            <person name="Chiba Y."/>
            <person name="Ishida S."/>
            <person name="Ono Y."/>
            <person name="Takiguchi S."/>
            <person name="Watanabe S."/>
            <person name="Yosida M."/>
            <person name="Hotuta T."/>
            <person name="Kusano J."/>
            <person name="Kanehori K."/>
            <person name="Takahashi-Fujii A."/>
            <person name="Hara H."/>
            <person name="Tanase T.-O."/>
            <person name="Nomura Y."/>
            <person name="Togiya S."/>
            <person name="Komai F."/>
            <person name="Hara R."/>
            <person name="Takeuchi K."/>
            <person name="Arita M."/>
            <person name="Imose N."/>
            <person name="Musashino K."/>
            <person name="Yuuki H."/>
            <person name="Oshima A."/>
            <person name="Sasaki N."/>
            <person name="Aotsuka S."/>
            <person name="Yoshikawa Y."/>
            <person name="Matsunawa H."/>
            <person name="Ichihara T."/>
            <person name="Shiohata N."/>
            <person name="Sano S."/>
            <person name="Moriya S."/>
            <person name="Momiyama H."/>
            <person name="Satoh N."/>
            <person name="Takami S."/>
            <person name="Terashima Y."/>
            <person name="Suzuki O."/>
            <person name="Nakagawa S."/>
            <person name="Senoh A."/>
            <person name="Mizoguchi H."/>
            <person name="Goto Y."/>
            <person name="Shimizu F."/>
            <person name="Wakebe H."/>
            <person name="Hishigaki H."/>
            <person name="Watanabe T."/>
            <person name="Sugiyama A."/>
            <person name="Takemoto M."/>
            <person name="Kawakami B."/>
            <person name="Yamazaki M."/>
            <person name="Watanabe K."/>
            <person name="Kumagai A."/>
            <person name="Itakura S."/>
            <person name="Fukuzumi Y."/>
            <person name="Fujimori Y."/>
            <person name="Komiyama M."/>
            <person name="Tashiro H."/>
            <person name="Tanigami A."/>
            <person name="Fujiwara T."/>
            <person name="Ono T."/>
            <person name="Yamada K."/>
            <person name="Fujii Y."/>
            <person name="Ozaki K."/>
            <person name="Hirao M."/>
            <person name="Ohmori Y."/>
            <person name="Kawabata A."/>
            <person name="Hikiji T."/>
            <person name="Kobatake N."/>
            <person name="Inagaki H."/>
            <person name="Ikema Y."/>
            <person name="Okamoto S."/>
            <person name="Okitani R."/>
            <person name="Kawakami T."/>
            <person name="Noguchi S."/>
            <person name="Itoh T."/>
            <person name="Shigeta K."/>
            <person name="Senba T."/>
            <person name="Matsumura K."/>
            <person name="Nakajima Y."/>
            <person name="Mizuno T."/>
            <person name="Morinaga M."/>
            <person name="Sasaki M."/>
            <person name="Togashi T."/>
            <person name="Oyama M."/>
            <person name="Hata H."/>
            <person name="Watanabe M."/>
            <person name="Komatsu T."/>
            <person name="Mizushima-Sugano J."/>
            <person name="Satoh T."/>
            <person name="Shirai Y."/>
            <person name="Takahashi Y."/>
            <person name="Nakagawa K."/>
            <person name="Okumura K."/>
            <person name="Nagase T."/>
            <person name="Nomura N."/>
            <person name="Kikuchi H."/>
            <person name="Masuho Y."/>
            <person name="Yamashita R."/>
            <person name="Nakai K."/>
            <person name="Yada T."/>
            <person name="Nakamura Y."/>
            <person name="Ohara O."/>
            <person name="Isogai T."/>
            <person name="Sugano S."/>
        </authorList>
    </citation>
    <scope>NUCLEOTIDE SEQUENCE [LARGE SCALE MRNA]</scope>
    <source>
        <tissue>Hippocampus</tissue>
    </source>
</reference>
<reference key="7">
    <citation type="submission" date="2004-05" db="EMBL/GenBank/DDBJ databases">
        <title>Cloning of human full open reading frames in Gateway(TM) system entry vector (pDONR201).</title>
        <authorList>
            <person name="Ebert L."/>
            <person name="Schick M."/>
            <person name="Neubert P."/>
            <person name="Schatten R."/>
            <person name="Henze S."/>
            <person name="Korn B."/>
        </authorList>
    </citation>
    <scope>NUCLEOTIDE SEQUENCE [LARGE SCALE MRNA]</scope>
</reference>
<reference key="8">
    <citation type="journal article" date="2000" name="Nature">
        <title>The DNA sequence of human chromosome 21.</title>
        <authorList>
            <person name="Hattori M."/>
            <person name="Fujiyama A."/>
            <person name="Taylor T.D."/>
            <person name="Watanabe H."/>
            <person name="Yada T."/>
            <person name="Park H.-S."/>
            <person name="Toyoda A."/>
            <person name="Ishii K."/>
            <person name="Totoki Y."/>
            <person name="Choi D.-K."/>
            <person name="Groner Y."/>
            <person name="Soeda E."/>
            <person name="Ohki M."/>
            <person name="Takagi T."/>
            <person name="Sakaki Y."/>
            <person name="Taudien S."/>
            <person name="Blechschmidt K."/>
            <person name="Polley A."/>
            <person name="Menzel U."/>
            <person name="Delabar J."/>
            <person name="Kumpf K."/>
            <person name="Lehmann R."/>
            <person name="Patterson D."/>
            <person name="Reichwald K."/>
            <person name="Rump A."/>
            <person name="Schillhabel M."/>
            <person name="Schudy A."/>
            <person name="Zimmermann W."/>
            <person name="Rosenthal A."/>
            <person name="Kudoh J."/>
            <person name="Shibuya K."/>
            <person name="Kawasaki K."/>
            <person name="Asakawa S."/>
            <person name="Shintani A."/>
            <person name="Sasaki T."/>
            <person name="Nagamine K."/>
            <person name="Mitsuyama S."/>
            <person name="Antonarakis S.E."/>
            <person name="Minoshima S."/>
            <person name="Shimizu N."/>
            <person name="Nordsiek G."/>
            <person name="Hornischer K."/>
            <person name="Brandt P."/>
            <person name="Scharfe M."/>
            <person name="Schoen O."/>
            <person name="Desario A."/>
            <person name="Reichelt J."/>
            <person name="Kauer G."/>
            <person name="Bloecker H."/>
            <person name="Ramser J."/>
            <person name="Beck A."/>
            <person name="Klages S."/>
            <person name="Hennig S."/>
            <person name="Riesselmann L."/>
            <person name="Dagand E."/>
            <person name="Wehrmeyer S."/>
            <person name="Borzym K."/>
            <person name="Gardiner K."/>
            <person name="Nizetic D."/>
            <person name="Francis F."/>
            <person name="Lehrach H."/>
            <person name="Reinhardt R."/>
            <person name="Yaspo M.-L."/>
        </authorList>
    </citation>
    <scope>NUCLEOTIDE SEQUENCE [LARGE SCALE GENOMIC DNA]</scope>
</reference>
<reference key="9">
    <citation type="submission" date="2005-09" db="EMBL/GenBank/DDBJ databases">
        <authorList>
            <person name="Mural R.J."/>
            <person name="Istrail S."/>
            <person name="Sutton G."/>
            <person name="Florea L."/>
            <person name="Halpern A.L."/>
            <person name="Mobarry C.M."/>
            <person name="Lippert R."/>
            <person name="Walenz B."/>
            <person name="Shatkay H."/>
            <person name="Dew I."/>
            <person name="Miller J.R."/>
            <person name="Flanigan M.J."/>
            <person name="Edwards N.J."/>
            <person name="Bolanos R."/>
            <person name="Fasulo D."/>
            <person name="Halldorsson B.V."/>
            <person name="Hannenhalli S."/>
            <person name="Turner R."/>
            <person name="Yooseph S."/>
            <person name="Lu F."/>
            <person name="Nusskern D.R."/>
            <person name="Shue B.C."/>
            <person name="Zheng X.H."/>
            <person name="Zhong F."/>
            <person name="Delcher A.L."/>
            <person name="Huson D.H."/>
            <person name="Kravitz S.A."/>
            <person name="Mouchard L."/>
            <person name="Reinert K."/>
            <person name="Remington K.A."/>
            <person name="Clark A.G."/>
            <person name="Waterman M.S."/>
            <person name="Eichler E.E."/>
            <person name="Adams M.D."/>
            <person name="Hunkapiller M.W."/>
            <person name="Myers E.W."/>
            <person name="Venter J.C."/>
        </authorList>
    </citation>
    <scope>NUCLEOTIDE SEQUENCE [LARGE SCALE GENOMIC DNA]</scope>
</reference>
<reference key="10">
    <citation type="journal article" date="2004" name="Genome Res.">
        <title>The status, quality, and expansion of the NIH full-length cDNA project: the Mammalian Gene Collection (MGC).</title>
        <authorList>
            <consortium name="The MGC Project Team"/>
        </authorList>
    </citation>
    <scope>NUCLEOTIDE SEQUENCE [LARGE SCALE MRNA]</scope>
    <source>
        <tissue>Adrenal cortex</tissue>
    </source>
</reference>
<reference key="11">
    <citation type="journal article" date="2009" name="J. Biol. Chem.">
        <title>PEP-19, an intrinsically disordered regulator of calmodulin signaling.</title>
        <authorList>
            <person name="Kleerekoper Q.K."/>
            <person name="Putkey J.A."/>
        </authorList>
    </citation>
    <scope>FUNCTION</scope>
    <scope>INTERACTION WITH CALMODULIN</scope>
    <scope>DOMAIN</scope>
</reference>
<reference key="12">
    <citation type="journal article" date="2013" name="J. Biol. Chem.">
        <title>The calmodulin regulator protein, PEP-19, sensitizes ATP-induced Ca2+ release.</title>
        <authorList>
            <person name="Wang X."/>
            <person name="Xiong L.W."/>
            <person name="El Ayadi A."/>
            <person name="Boehning D."/>
            <person name="Putkey J.A."/>
        </authorList>
    </citation>
    <scope>FUNCTION</scope>
    <scope>MUTAGENESIS OF GLU-29; ASP-31; ASP-33; ASP-35; PRO-37 AND GLU-40</scope>
    <scope>REGION</scope>
</reference>
<reference evidence="12" key="13">
    <citation type="journal article" date="2016" name="Nat. Commun.">
        <title>PEP-19 modulates calcium binding to calmodulin by electrostatic steering.</title>
        <authorList>
            <person name="Wang X."/>
            <person name="Putkey J.A."/>
        </authorList>
    </citation>
    <scope>STRUCTURE BY NMR OF 3-62 IN COMPLEX WITH CALM1</scope>
    <scope>FUNCTION</scope>
    <scope>INTERACTION WITH CALMODULIN</scope>
</reference>
<proteinExistence type="evidence at protein level"/>
<dbReference type="EMBL" id="X93349">
    <property type="protein sequence ID" value="CAA63724.1"/>
    <property type="molecule type" value="mRNA"/>
</dbReference>
<dbReference type="EMBL" id="U53709">
    <property type="protein sequence ID" value="AAC00024.1"/>
    <property type="molecule type" value="Genomic_DNA"/>
</dbReference>
<dbReference type="EMBL" id="U53707">
    <property type="protein sequence ID" value="AAC00024.1"/>
    <property type="status" value="JOINED"/>
    <property type="molecule type" value="Genomic_DNA"/>
</dbReference>
<dbReference type="EMBL" id="U53708">
    <property type="protein sequence ID" value="AAC00024.1"/>
    <property type="status" value="JOINED"/>
    <property type="molecule type" value="Genomic_DNA"/>
</dbReference>
<dbReference type="EMBL" id="U52969">
    <property type="protein sequence ID" value="AAB09033.1"/>
    <property type="molecule type" value="mRNA"/>
</dbReference>
<dbReference type="EMBL" id="AM183336">
    <property type="protein sequence ID" value="CAJ70630.1"/>
    <property type="molecule type" value="mRNA"/>
</dbReference>
<dbReference type="EMBL" id="AF064857">
    <property type="protein sequence ID" value="AAC23994.1"/>
    <property type="molecule type" value="Genomic_DNA"/>
</dbReference>
<dbReference type="EMBL" id="AF416716">
    <property type="protein sequence ID" value="AAL16810.1"/>
    <property type="molecule type" value="mRNA"/>
</dbReference>
<dbReference type="EMBL" id="AK289964">
    <property type="protein sequence ID" value="BAF82653.1"/>
    <property type="molecule type" value="mRNA"/>
</dbReference>
<dbReference type="EMBL" id="CR450319">
    <property type="protein sequence ID" value="CAG29315.1"/>
    <property type="molecule type" value="mRNA"/>
</dbReference>
<dbReference type="EMBL" id="AL163281">
    <property type="protein sequence ID" value="CAB90443.1"/>
    <property type="molecule type" value="Genomic_DNA"/>
</dbReference>
<dbReference type="EMBL" id="CH471079">
    <property type="protein sequence ID" value="EAX09623.1"/>
    <property type="molecule type" value="Genomic_DNA"/>
</dbReference>
<dbReference type="EMBL" id="BC013791">
    <property type="protein sequence ID" value="AAH13791.1"/>
    <property type="molecule type" value="mRNA"/>
</dbReference>
<dbReference type="CCDS" id="CCDS33563.1"/>
<dbReference type="RefSeq" id="NP_006189.2">
    <property type="nucleotide sequence ID" value="NM_006198.2"/>
</dbReference>
<dbReference type="PDB" id="2N77">
    <property type="method" value="NMR"/>
    <property type="chains" value="B=3-62"/>
</dbReference>
<dbReference type="PDBsum" id="2N77"/>
<dbReference type="BMRB" id="P48539"/>
<dbReference type="SMR" id="P48539"/>
<dbReference type="BioGRID" id="111150">
    <property type="interactions" value="51"/>
</dbReference>
<dbReference type="FunCoup" id="P48539">
    <property type="interactions" value="262"/>
</dbReference>
<dbReference type="IntAct" id="P48539">
    <property type="interactions" value="47"/>
</dbReference>
<dbReference type="STRING" id="9606.ENSP00000329403"/>
<dbReference type="iPTMnet" id="P48539"/>
<dbReference type="PhosphoSitePlus" id="P48539"/>
<dbReference type="BioMuta" id="PCP4"/>
<dbReference type="DMDM" id="3915800"/>
<dbReference type="CPTAC" id="CPTAC-1263"/>
<dbReference type="MassIVE" id="P48539"/>
<dbReference type="PaxDb" id="9606-ENSP00000329403"/>
<dbReference type="PeptideAtlas" id="P48539"/>
<dbReference type="ProteomicsDB" id="55899"/>
<dbReference type="Antibodypedia" id="1604">
    <property type="antibodies" value="113 antibodies from 21 providers"/>
</dbReference>
<dbReference type="DNASU" id="5121"/>
<dbReference type="Ensembl" id="ENST00000328619.10">
    <property type="protein sequence ID" value="ENSP00000329403.5"/>
    <property type="gene ID" value="ENSG00000183036.11"/>
</dbReference>
<dbReference type="Ensembl" id="ENST00000708005.1">
    <property type="protein sequence ID" value="ENSP00000517069.1"/>
    <property type="gene ID" value="ENSG00000291560.1"/>
</dbReference>
<dbReference type="GeneID" id="5121"/>
<dbReference type="KEGG" id="hsa:5121"/>
<dbReference type="MANE-Select" id="ENST00000328619.10">
    <property type="protein sequence ID" value="ENSP00000329403.5"/>
    <property type="RefSeq nucleotide sequence ID" value="NM_006198.3"/>
    <property type="RefSeq protein sequence ID" value="NP_006189.2"/>
</dbReference>
<dbReference type="UCSC" id="uc002yyp.4">
    <property type="organism name" value="human"/>
</dbReference>
<dbReference type="AGR" id="HGNC:8742"/>
<dbReference type="CTD" id="5121"/>
<dbReference type="DisGeNET" id="5121"/>
<dbReference type="GeneCards" id="PCP4"/>
<dbReference type="HGNC" id="HGNC:8742">
    <property type="gene designation" value="PCP4"/>
</dbReference>
<dbReference type="HPA" id="ENSG00000183036">
    <property type="expression patterns" value="Tissue enhanced (brain, choroid plexus, seminal vesicle)"/>
</dbReference>
<dbReference type="MIM" id="601629">
    <property type="type" value="gene"/>
</dbReference>
<dbReference type="neXtProt" id="NX_P48539"/>
<dbReference type="OpenTargets" id="ENSG00000183036"/>
<dbReference type="PharmGKB" id="PA33087"/>
<dbReference type="VEuPathDB" id="HostDB:ENSG00000183036"/>
<dbReference type="eggNOG" id="ENOG502STZW">
    <property type="taxonomic scope" value="Eukaryota"/>
</dbReference>
<dbReference type="GeneTree" id="ENSGT00530000064267"/>
<dbReference type="HOGENOM" id="CLU_202697_1_0_1"/>
<dbReference type="InParanoid" id="P48539"/>
<dbReference type="OMA" id="PHCEGQM"/>
<dbReference type="OrthoDB" id="9944346at2759"/>
<dbReference type="PAN-GO" id="P48539">
    <property type="GO annotations" value="3 GO annotations based on evolutionary models"/>
</dbReference>
<dbReference type="PhylomeDB" id="P48539"/>
<dbReference type="TreeFam" id="TF336068"/>
<dbReference type="PathwayCommons" id="P48539"/>
<dbReference type="SignaLink" id="P48539"/>
<dbReference type="SIGNOR" id="P48539"/>
<dbReference type="BioGRID-ORCS" id="5121">
    <property type="hits" value="14 hits in 1115 CRISPR screens"/>
</dbReference>
<dbReference type="ChiTaRS" id="PCP4">
    <property type="organism name" value="human"/>
</dbReference>
<dbReference type="GeneWiki" id="PCP4"/>
<dbReference type="GenomeRNAi" id="5121"/>
<dbReference type="Pharos" id="P48539">
    <property type="development level" value="Tbio"/>
</dbReference>
<dbReference type="PRO" id="PR:P48539"/>
<dbReference type="Proteomes" id="UP000005640">
    <property type="component" value="Chromosome 21"/>
</dbReference>
<dbReference type="RNAct" id="P48539">
    <property type="molecule type" value="protein"/>
</dbReference>
<dbReference type="Bgee" id="ENSG00000183036">
    <property type="expression patterns" value="Expressed in lateral nuclear group of thalamus and 170 other cell types or tissues"/>
</dbReference>
<dbReference type="ExpressionAtlas" id="P48539">
    <property type="expression patterns" value="baseline and differential"/>
</dbReference>
<dbReference type="GO" id="GO:0005737">
    <property type="term" value="C:cytoplasm"/>
    <property type="evidence" value="ECO:0000318"/>
    <property type="project" value="GO_Central"/>
</dbReference>
<dbReference type="GO" id="GO:0005829">
    <property type="term" value="C:cytosol"/>
    <property type="evidence" value="ECO:0007005"/>
    <property type="project" value="UniProtKB"/>
</dbReference>
<dbReference type="GO" id="GO:0005634">
    <property type="term" value="C:nucleus"/>
    <property type="evidence" value="ECO:0007005"/>
    <property type="project" value="UniProtKB"/>
</dbReference>
<dbReference type="GO" id="GO:0032991">
    <property type="term" value="C:protein-containing complex"/>
    <property type="evidence" value="ECO:0000314"/>
    <property type="project" value="CAFA"/>
</dbReference>
<dbReference type="GO" id="GO:0005509">
    <property type="term" value="F:calcium ion binding"/>
    <property type="evidence" value="ECO:0000314"/>
    <property type="project" value="UniProtKB"/>
</dbReference>
<dbReference type="GO" id="GO:0005516">
    <property type="term" value="F:calmodulin binding"/>
    <property type="evidence" value="ECO:0000314"/>
    <property type="project" value="UniProtKB"/>
</dbReference>
<dbReference type="GO" id="GO:1905291">
    <property type="term" value="P:positive regulation of CAMKK-AMPK signaling cascade"/>
    <property type="evidence" value="ECO:0000315"/>
    <property type="project" value="UniProtKB"/>
</dbReference>
<dbReference type="GO" id="GO:0045666">
    <property type="term" value="P:positive regulation of neuron differentiation"/>
    <property type="evidence" value="ECO:0000315"/>
    <property type="project" value="UniProtKB"/>
</dbReference>
<dbReference type="DisProt" id="DP00592"/>
<dbReference type="InterPro" id="IPR052142">
    <property type="entry name" value="Calmodulin_Regulator_PCP4-like"/>
</dbReference>
<dbReference type="PANTHER" id="PTHR15359:SF7">
    <property type="entry name" value="CALMODULIN REGULATOR PROTEIN PCP4"/>
    <property type="match status" value="1"/>
</dbReference>
<dbReference type="PANTHER" id="PTHR15359">
    <property type="entry name" value="IG-LIKE DOMAIN-CONTAINING PROTEIN"/>
    <property type="match status" value="1"/>
</dbReference>
<evidence type="ECO:0000255" key="1">
    <source>
        <dbReference type="PROSITE-ProRule" id="PRU00116"/>
    </source>
</evidence>
<evidence type="ECO:0000256" key="2">
    <source>
        <dbReference type="SAM" id="MobiDB-lite"/>
    </source>
</evidence>
<evidence type="ECO:0000269" key="3">
    <source>
    </source>
</evidence>
<evidence type="ECO:0000269" key="4">
    <source>
    </source>
</evidence>
<evidence type="ECO:0000269" key="5">
    <source>
    </source>
</evidence>
<evidence type="ECO:0000269" key="6">
    <source>
    </source>
</evidence>
<evidence type="ECO:0000303" key="7">
    <source>
    </source>
</evidence>
<evidence type="ECO:0000303" key="8">
    <source>
    </source>
</evidence>
<evidence type="ECO:0000303" key="9">
    <source>
    </source>
</evidence>
<evidence type="ECO:0000305" key="10"/>
<evidence type="ECO:0000312" key="11">
    <source>
        <dbReference type="HGNC" id="HGNC:8742"/>
    </source>
</evidence>
<evidence type="ECO:0007744" key="12">
    <source>
        <dbReference type="PDB" id="2N77"/>
    </source>
</evidence>
<evidence type="ECO:0007829" key="13">
    <source>
        <dbReference type="PDB" id="2N77"/>
    </source>
</evidence>
<gene>
    <name evidence="8 11" type="primary">PCP4</name>
    <name evidence="7" type="synonym">PEP19</name>
</gene>
<protein>
    <recommendedName>
        <fullName evidence="10">Calmodulin regulator protein PCP4</fullName>
    </recommendedName>
    <alternativeName>
        <fullName evidence="9">Brain-specific polypeptide PEP-19</fullName>
    </alternativeName>
    <alternativeName>
        <fullName evidence="11">Purkinje cell protein 4</fullName>
    </alternativeName>
</protein>
<comment type="function">
    <text evidence="3 4 5 6">Functions as a modulator of calcium-binding by calmodulin. Thereby, regulates calmodulin activity and the different processes it controls (PubMed:19106096, PubMed:23204517, PubMed:27876793). For instance, may play a role in neuronal differentiation through activation of calmodulin-dependent kinase signaling pathways (PubMed:21491429).</text>
</comment>
<comment type="subunit">
    <text evidence="3 6">Binds to both calcium-free and calcium-bound calmodulin. The affinity for the calcium-bound form is 50-fold greater.</text>
</comment>
<comment type="interaction">
    <interactant intactId="EBI-4287270">
        <id>P48539</id>
    </interactant>
    <interactant intactId="EBI-12041267">
        <id>Q8TD86</id>
        <label>CALML6</label>
    </interactant>
    <organismsDiffer>false</organismsDiffer>
    <experiments>3</experiments>
</comment>
<comment type="interaction">
    <interactant intactId="EBI-4287270">
        <id>P48539</id>
    </interactant>
    <interactant intactId="EBI-750109">
        <id>Q9NYB0</id>
        <label>TERF2IP</label>
    </interactant>
    <organismsDiffer>false</organismsDiffer>
    <experiments>2</experiments>
</comment>
<comment type="domain">
    <text evidence="3">Mostly intrinsically disordered, with residual structure localized to the IQ domain which mediates the interaction with calmodulin.</text>
</comment>
<comment type="similarity">
    <text evidence="10">Belongs to the PCP4 family.</text>
</comment>
<organism>
    <name type="scientific">Homo sapiens</name>
    <name type="common">Human</name>
    <dbReference type="NCBI Taxonomy" id="9606"/>
    <lineage>
        <taxon>Eukaryota</taxon>
        <taxon>Metazoa</taxon>
        <taxon>Chordata</taxon>
        <taxon>Craniata</taxon>
        <taxon>Vertebrata</taxon>
        <taxon>Euteleostomi</taxon>
        <taxon>Mammalia</taxon>
        <taxon>Eutheria</taxon>
        <taxon>Euarchontoglires</taxon>
        <taxon>Primates</taxon>
        <taxon>Haplorrhini</taxon>
        <taxon>Catarrhini</taxon>
        <taxon>Hominidae</taxon>
        <taxon>Homo</taxon>
    </lineage>
</organism>
<feature type="chain" id="PRO_0000058306" description="Calmodulin regulator protein PCP4">
    <location>
        <begin position="1"/>
        <end position="62"/>
    </location>
</feature>
<feature type="domain" description="IQ" evidence="1">
    <location>
        <begin position="39"/>
        <end position="62"/>
    </location>
</feature>
<feature type="region of interest" description="Disordered" evidence="2">
    <location>
        <begin position="1"/>
        <end position="39"/>
    </location>
</feature>
<feature type="region of interest" description="Acidic; binds calcium and is required for modulating the calcium-binding kinetics of calmodulin" evidence="5">
    <location>
        <begin position="28"/>
        <end position="40"/>
    </location>
</feature>
<feature type="compositionally biased region" description="Basic and acidic residues" evidence="2">
    <location>
        <begin position="12"/>
        <end position="28"/>
    </location>
</feature>
<feature type="mutagenesis site" description="No effect on the calmodulin modulator function." evidence="5">
    <original>E</original>
    <variation>A</variation>
    <location>
        <position position="29"/>
    </location>
</feature>
<feature type="mutagenesis site" description="Decreased calmodulin modulator function." evidence="5">
    <original>D</original>
    <variation>A</variation>
    <location>
        <position position="31"/>
    </location>
</feature>
<feature type="mutagenesis site" description="Decreased calmodulin modulator function." evidence="5">
    <original>D</original>
    <variation>A</variation>
    <location>
        <position position="33"/>
    </location>
</feature>
<feature type="mutagenesis site" description="No effect on the calmodulin modulator function." evidence="5">
    <original>D</original>
    <variation>A</variation>
    <location>
        <position position="35"/>
    </location>
</feature>
<feature type="mutagenesis site" description="Loss of the calmodulin modulator function." evidence="5">
    <original>P</original>
    <variation>G</variation>
    <location>
        <position position="37"/>
    </location>
</feature>
<feature type="mutagenesis site" description="Decreased calmodulin modulator function." evidence="5">
    <original>E</original>
    <variation>A</variation>
    <location>
        <position position="40"/>
    </location>
</feature>
<feature type="sequence conflict" description="In Ref. 1; CAA63724." evidence="10" ref="1">
    <original>A</original>
    <variation>P</variation>
    <location>
        <position position="9"/>
    </location>
</feature>
<feature type="strand" evidence="13">
    <location>
        <begin position="34"/>
        <end position="36"/>
    </location>
</feature>
<feature type="helix" evidence="13">
    <location>
        <begin position="37"/>
        <end position="58"/>
    </location>
</feature>
<accession>P48539</accession>
<accession>A6NDJ9</accession>
<accession>Q6ICS4</accession>
<accession>Q93059</accession>
<keyword id="KW-0002">3D-structure</keyword>
<keyword id="KW-0112">Calmodulin-binding</keyword>
<keyword id="KW-1267">Proteomics identification</keyword>
<keyword id="KW-1185">Reference proteome</keyword>
<sequence length="62" mass="6791">MSERQGAGATNGKDKTSGENDGQKKVQEEFDIDMDAPETERAAVAIQSQFRKFQKKKAGSQS</sequence>